<organism>
    <name type="scientific">Staphylococcus aureus (strain COL)</name>
    <dbReference type="NCBI Taxonomy" id="93062"/>
    <lineage>
        <taxon>Bacteria</taxon>
        <taxon>Bacillati</taxon>
        <taxon>Bacillota</taxon>
        <taxon>Bacilli</taxon>
        <taxon>Bacillales</taxon>
        <taxon>Staphylococcaceae</taxon>
        <taxon>Staphylococcus</taxon>
    </lineage>
</organism>
<protein>
    <recommendedName>
        <fullName>Serine protease SplD</fullName>
        <ecNumber>3.4.21.-</ecNumber>
    </recommendedName>
</protein>
<reference key="1">
    <citation type="journal article" date="2005" name="J. Bacteriol.">
        <title>Insights on evolution of virulence and resistance from the complete genome analysis of an early methicillin-resistant Staphylococcus aureus strain and a biofilm-producing methicillin-resistant Staphylococcus epidermidis strain.</title>
        <authorList>
            <person name="Gill S.R."/>
            <person name="Fouts D.E."/>
            <person name="Archer G.L."/>
            <person name="Mongodin E.F."/>
            <person name="DeBoy R.T."/>
            <person name="Ravel J."/>
            <person name="Paulsen I.T."/>
            <person name="Kolonay J.F."/>
            <person name="Brinkac L.M."/>
            <person name="Beanan M.J."/>
            <person name="Dodson R.J."/>
            <person name="Daugherty S.C."/>
            <person name="Madupu R."/>
            <person name="Angiuoli S.V."/>
            <person name="Durkin A.S."/>
            <person name="Haft D.H."/>
            <person name="Vamathevan J.J."/>
            <person name="Khouri H."/>
            <person name="Utterback T.R."/>
            <person name="Lee C."/>
            <person name="Dimitrov G."/>
            <person name="Jiang L."/>
            <person name="Qin H."/>
            <person name="Weidman J."/>
            <person name="Tran K."/>
            <person name="Kang K.H."/>
            <person name="Hance I.R."/>
            <person name="Nelson K.E."/>
            <person name="Fraser C.M."/>
        </authorList>
    </citation>
    <scope>NUCLEOTIDE SEQUENCE [LARGE SCALE GENOMIC DNA]</scope>
    <source>
        <strain>COL</strain>
    </source>
</reference>
<comment type="subcellular location">
    <subcellularLocation>
        <location evidence="1">Secreted</location>
    </subcellularLocation>
</comment>
<comment type="similarity">
    <text evidence="3">Belongs to the peptidase S1B family.</text>
</comment>
<accession>Q5HEW3</accession>
<evidence type="ECO:0000250" key="1"/>
<evidence type="ECO:0000255" key="2"/>
<evidence type="ECO:0000305" key="3"/>
<name>SPLD_STAAC</name>
<dbReference type="EC" id="3.4.21.-"/>
<dbReference type="EMBL" id="CP000046">
    <property type="protein sequence ID" value="AAW36881.1"/>
    <property type="molecule type" value="Genomic_DNA"/>
</dbReference>
<dbReference type="RefSeq" id="WP_001038708.1">
    <property type="nucleotide sequence ID" value="NC_002951.2"/>
</dbReference>
<dbReference type="SMR" id="Q5HEW3"/>
<dbReference type="MEROPS" id="S01.526"/>
<dbReference type="KEGG" id="sac:SACOL1866"/>
<dbReference type="HOGENOM" id="CLU_073589_2_0_9"/>
<dbReference type="Proteomes" id="UP000000530">
    <property type="component" value="Chromosome"/>
</dbReference>
<dbReference type="GO" id="GO:0005576">
    <property type="term" value="C:extracellular region"/>
    <property type="evidence" value="ECO:0007669"/>
    <property type="project" value="UniProtKB-SubCell"/>
</dbReference>
<dbReference type="GO" id="GO:0008236">
    <property type="term" value="F:serine-type peptidase activity"/>
    <property type="evidence" value="ECO:0007669"/>
    <property type="project" value="UniProtKB-KW"/>
</dbReference>
<dbReference type="GO" id="GO:0006508">
    <property type="term" value="P:proteolysis"/>
    <property type="evidence" value="ECO:0007669"/>
    <property type="project" value="UniProtKB-KW"/>
</dbReference>
<dbReference type="Gene3D" id="2.40.10.10">
    <property type="entry name" value="Trypsin-like serine proteases"/>
    <property type="match status" value="2"/>
</dbReference>
<dbReference type="InterPro" id="IPR009003">
    <property type="entry name" value="Peptidase_S1_PA"/>
</dbReference>
<dbReference type="InterPro" id="IPR043504">
    <property type="entry name" value="Peptidase_S1_PA_chymotrypsin"/>
</dbReference>
<dbReference type="InterPro" id="IPR008256">
    <property type="entry name" value="Peptidase_S1B"/>
</dbReference>
<dbReference type="InterPro" id="IPR028301">
    <property type="entry name" value="V8_his_AS"/>
</dbReference>
<dbReference type="PANTHER" id="PTHR43019:SF23">
    <property type="entry name" value="PROTEASE DO-LIKE 5, CHLOROPLASTIC"/>
    <property type="match status" value="1"/>
</dbReference>
<dbReference type="PANTHER" id="PTHR43019">
    <property type="entry name" value="SERINE ENDOPROTEASE DEGS"/>
    <property type="match status" value="1"/>
</dbReference>
<dbReference type="Pfam" id="PF13365">
    <property type="entry name" value="Trypsin_2"/>
    <property type="match status" value="1"/>
</dbReference>
<dbReference type="PRINTS" id="PR00839">
    <property type="entry name" value="V8PROTEASE"/>
</dbReference>
<dbReference type="SUPFAM" id="SSF50494">
    <property type="entry name" value="Trypsin-like serine proteases"/>
    <property type="match status" value="1"/>
</dbReference>
<dbReference type="PROSITE" id="PS00672">
    <property type="entry name" value="V8_HIS"/>
    <property type="match status" value="1"/>
</dbReference>
<keyword id="KW-0378">Hydrolase</keyword>
<keyword id="KW-0645">Protease</keyword>
<keyword id="KW-0964">Secreted</keyword>
<keyword id="KW-0720">Serine protease</keyword>
<keyword id="KW-0732">Signal</keyword>
<sequence>MNKNIIIKSIAALTILTSITGVGTTVVDGIQQTAKAENSVKLITNTNVAPYSGVTWMGAGTGFVVGNQTIITNKHVTYHMKVGDEIKAHPNGFYNNGGGLYKVTKIVDYPGKEDIAVVQVEEKSTQPKGRKFKDFTSKFNIASEAKENEPISVIGYPNPNGNKLQMYESTGKVLSVNGNIVTSDAVVQPGSSGSPILNSKREAIGVMYASDKPTGESTRSFAVYFSPEIKKFIADNLDK</sequence>
<proteinExistence type="inferred from homology"/>
<feature type="signal peptide" evidence="2">
    <location>
        <begin position="1"/>
        <end position="36"/>
    </location>
</feature>
<feature type="chain" id="PRO_0000359564" description="Serine protease SplD">
    <location>
        <begin position="37"/>
        <end position="239"/>
    </location>
</feature>
<feature type="active site" description="Charge relay system" evidence="1">
    <location>
        <position position="75"/>
    </location>
</feature>
<feature type="active site" description="Charge relay system" evidence="1">
    <location>
        <position position="114"/>
    </location>
</feature>
<feature type="active site" description="Charge relay system" evidence="1">
    <location>
        <position position="192"/>
    </location>
</feature>
<gene>
    <name type="primary">splD</name>
    <name type="ordered locus">SACOL1866</name>
</gene>